<protein>
    <recommendedName>
        <fullName evidence="1">ATP-dependent dethiobiotin synthetase BioD</fullName>
        <ecNumber evidence="1">6.3.3.3</ecNumber>
    </recommendedName>
    <alternativeName>
        <fullName evidence="1">DTB synthetase</fullName>
        <shortName evidence="1">DTBS</shortName>
    </alternativeName>
    <alternativeName>
        <fullName evidence="1">Dethiobiotin synthase</fullName>
    </alternativeName>
</protein>
<gene>
    <name evidence="1" type="primary">bioD</name>
    <name type="ordered locus">FTM_0852</name>
</gene>
<keyword id="KW-0067">ATP-binding</keyword>
<keyword id="KW-0093">Biotin biosynthesis</keyword>
<keyword id="KW-0963">Cytoplasm</keyword>
<keyword id="KW-0436">Ligase</keyword>
<keyword id="KW-0460">Magnesium</keyword>
<keyword id="KW-0479">Metal-binding</keyword>
<keyword id="KW-0547">Nucleotide-binding</keyword>
<evidence type="ECO:0000255" key="1">
    <source>
        <dbReference type="HAMAP-Rule" id="MF_00336"/>
    </source>
</evidence>
<feature type="chain" id="PRO_1000119872" description="ATP-dependent dethiobiotin synthetase BioD">
    <location>
        <begin position="1"/>
        <end position="225"/>
    </location>
</feature>
<feature type="active site" evidence="1">
    <location>
        <position position="37"/>
    </location>
</feature>
<feature type="binding site" evidence="1">
    <location>
        <begin position="12"/>
        <end position="17"/>
    </location>
    <ligand>
        <name>ATP</name>
        <dbReference type="ChEBI" id="CHEBI:30616"/>
    </ligand>
</feature>
<feature type="binding site" evidence="1">
    <location>
        <position position="16"/>
    </location>
    <ligand>
        <name>Mg(2+)</name>
        <dbReference type="ChEBI" id="CHEBI:18420"/>
    </ligand>
</feature>
<feature type="binding site" evidence="1">
    <location>
        <position position="41"/>
    </location>
    <ligand>
        <name>substrate</name>
    </ligand>
</feature>
<feature type="binding site" evidence="1">
    <location>
        <position position="52"/>
    </location>
    <ligand>
        <name>ATP</name>
        <dbReference type="ChEBI" id="CHEBI:30616"/>
    </ligand>
</feature>
<feature type="binding site" evidence="1">
    <location>
        <position position="52"/>
    </location>
    <ligand>
        <name>Mg(2+)</name>
        <dbReference type="ChEBI" id="CHEBI:18420"/>
    </ligand>
</feature>
<feature type="binding site" evidence="1">
    <location>
        <begin position="114"/>
        <end position="117"/>
    </location>
    <ligand>
        <name>ATP</name>
        <dbReference type="ChEBI" id="CHEBI:30616"/>
    </ligand>
</feature>
<feature type="binding site" evidence="1">
    <location>
        <position position="114"/>
    </location>
    <ligand>
        <name>Mg(2+)</name>
        <dbReference type="ChEBI" id="CHEBI:18420"/>
    </ligand>
</feature>
<feature type="binding site" evidence="1">
    <location>
        <begin position="174"/>
        <end position="175"/>
    </location>
    <ligand>
        <name>ATP</name>
        <dbReference type="ChEBI" id="CHEBI:30616"/>
    </ligand>
</feature>
<dbReference type="EC" id="6.3.3.3" evidence="1"/>
<dbReference type="EMBL" id="CP000915">
    <property type="protein sequence ID" value="ACD30799.1"/>
    <property type="molecule type" value="Genomic_DNA"/>
</dbReference>
<dbReference type="SMR" id="B2SGE0"/>
<dbReference type="KEGG" id="ftm:FTM_0852"/>
<dbReference type="HOGENOM" id="CLU_072551_0_0_6"/>
<dbReference type="UniPathway" id="UPA00078">
    <property type="reaction ID" value="UER00161"/>
</dbReference>
<dbReference type="GO" id="GO:0005829">
    <property type="term" value="C:cytosol"/>
    <property type="evidence" value="ECO:0007669"/>
    <property type="project" value="TreeGrafter"/>
</dbReference>
<dbReference type="GO" id="GO:0005524">
    <property type="term" value="F:ATP binding"/>
    <property type="evidence" value="ECO:0007669"/>
    <property type="project" value="UniProtKB-UniRule"/>
</dbReference>
<dbReference type="GO" id="GO:0004141">
    <property type="term" value="F:dethiobiotin synthase activity"/>
    <property type="evidence" value="ECO:0007669"/>
    <property type="project" value="UniProtKB-UniRule"/>
</dbReference>
<dbReference type="GO" id="GO:0000287">
    <property type="term" value="F:magnesium ion binding"/>
    <property type="evidence" value="ECO:0007669"/>
    <property type="project" value="UniProtKB-UniRule"/>
</dbReference>
<dbReference type="GO" id="GO:0009102">
    <property type="term" value="P:biotin biosynthetic process"/>
    <property type="evidence" value="ECO:0007669"/>
    <property type="project" value="UniProtKB-UniRule"/>
</dbReference>
<dbReference type="CDD" id="cd03109">
    <property type="entry name" value="DTBS"/>
    <property type="match status" value="1"/>
</dbReference>
<dbReference type="FunFam" id="3.40.50.300:FF:002404">
    <property type="entry name" value="ATP-dependent dethiobiotin synthetase BioD"/>
    <property type="match status" value="1"/>
</dbReference>
<dbReference type="Gene3D" id="3.40.50.300">
    <property type="entry name" value="P-loop containing nucleotide triphosphate hydrolases"/>
    <property type="match status" value="1"/>
</dbReference>
<dbReference type="HAMAP" id="MF_00336">
    <property type="entry name" value="BioD"/>
    <property type="match status" value="1"/>
</dbReference>
<dbReference type="InterPro" id="IPR004472">
    <property type="entry name" value="DTB_synth_BioD"/>
</dbReference>
<dbReference type="InterPro" id="IPR027417">
    <property type="entry name" value="P-loop_NTPase"/>
</dbReference>
<dbReference type="NCBIfam" id="TIGR00347">
    <property type="entry name" value="bioD"/>
    <property type="match status" value="1"/>
</dbReference>
<dbReference type="PANTHER" id="PTHR43210">
    <property type="entry name" value="DETHIOBIOTIN SYNTHETASE"/>
    <property type="match status" value="1"/>
</dbReference>
<dbReference type="PANTHER" id="PTHR43210:SF5">
    <property type="entry name" value="DETHIOBIOTIN SYNTHETASE"/>
    <property type="match status" value="1"/>
</dbReference>
<dbReference type="Pfam" id="PF13500">
    <property type="entry name" value="AAA_26"/>
    <property type="match status" value="1"/>
</dbReference>
<dbReference type="PIRSF" id="PIRSF006755">
    <property type="entry name" value="DTB_synth"/>
    <property type="match status" value="1"/>
</dbReference>
<dbReference type="SUPFAM" id="SSF52540">
    <property type="entry name" value="P-loop containing nucleoside triphosphate hydrolases"/>
    <property type="match status" value="1"/>
</dbReference>
<sequence length="225" mass="25189">MKKFFIIGTDTEVGKTYISTKLIEVCEHQNIKSLCLKPVASGQSQFSELCEDVESILNAYKHKFTAAEINLISFNQAVAPHIIAAKTKVDISIENLKQFIEDKYNQDLDILFIEGAGGLLTPYSDHTTQLDLIKALQIPVLLVSAIKVGCINHTLLTINELNRHNIKLAGWIANCNDSNIKYIDEQINTIEELSGYKCSAKISRNADYLDFIDLSKILISPEENE</sequence>
<accession>B2SGE0</accession>
<organism>
    <name type="scientific">Francisella tularensis subsp. mediasiatica (strain FSC147)</name>
    <dbReference type="NCBI Taxonomy" id="441952"/>
    <lineage>
        <taxon>Bacteria</taxon>
        <taxon>Pseudomonadati</taxon>
        <taxon>Pseudomonadota</taxon>
        <taxon>Gammaproteobacteria</taxon>
        <taxon>Thiotrichales</taxon>
        <taxon>Francisellaceae</taxon>
        <taxon>Francisella</taxon>
    </lineage>
</organism>
<comment type="function">
    <text evidence="1">Catalyzes a mechanistically unusual reaction, the ATP-dependent insertion of CO2 between the N7 and N8 nitrogen atoms of 7,8-diaminopelargonic acid (DAPA, also called 7,8-diammoniononanoate) to form a ureido ring.</text>
</comment>
<comment type="catalytic activity">
    <reaction evidence="1">
        <text>(7R,8S)-7,8-diammoniononanoate + CO2 + ATP = (4R,5S)-dethiobiotin + ADP + phosphate + 3 H(+)</text>
        <dbReference type="Rhea" id="RHEA:15805"/>
        <dbReference type="ChEBI" id="CHEBI:15378"/>
        <dbReference type="ChEBI" id="CHEBI:16526"/>
        <dbReference type="ChEBI" id="CHEBI:30616"/>
        <dbReference type="ChEBI" id="CHEBI:43474"/>
        <dbReference type="ChEBI" id="CHEBI:149469"/>
        <dbReference type="ChEBI" id="CHEBI:149473"/>
        <dbReference type="ChEBI" id="CHEBI:456216"/>
        <dbReference type="EC" id="6.3.3.3"/>
    </reaction>
</comment>
<comment type="cofactor">
    <cofactor evidence="1">
        <name>Mg(2+)</name>
        <dbReference type="ChEBI" id="CHEBI:18420"/>
    </cofactor>
</comment>
<comment type="pathway">
    <text evidence="1">Cofactor biosynthesis; biotin biosynthesis; biotin from 7,8-diaminononanoate: step 1/2.</text>
</comment>
<comment type="subunit">
    <text evidence="1">Homodimer.</text>
</comment>
<comment type="subcellular location">
    <subcellularLocation>
        <location evidence="1">Cytoplasm</location>
    </subcellularLocation>
</comment>
<comment type="similarity">
    <text evidence="1">Belongs to the dethiobiotin synthetase family.</text>
</comment>
<proteinExistence type="inferred from homology"/>
<name>BIOD_FRATM</name>
<reference key="1">
    <citation type="journal article" date="2009" name="PLoS Pathog.">
        <title>Molecular evolutionary consequences of niche restriction in Francisella tularensis, a facultative intracellular pathogen.</title>
        <authorList>
            <person name="Larsson P."/>
            <person name="Elfsmark D."/>
            <person name="Svensson K."/>
            <person name="Wikstroem P."/>
            <person name="Forsman M."/>
            <person name="Brettin T."/>
            <person name="Keim P."/>
            <person name="Johansson A."/>
        </authorList>
    </citation>
    <scope>NUCLEOTIDE SEQUENCE [LARGE SCALE GENOMIC DNA]</scope>
    <source>
        <strain>FSC147</strain>
    </source>
</reference>